<dbReference type="EC" id="7.1.1.-" evidence="1"/>
<dbReference type="EMBL" id="CP000239">
    <property type="protein sequence ID" value="ABD00209.1"/>
    <property type="molecule type" value="Genomic_DNA"/>
</dbReference>
<dbReference type="RefSeq" id="WP_011430883.1">
    <property type="nucleotide sequence ID" value="NC_007775.1"/>
</dbReference>
<dbReference type="SMR" id="Q2JT01"/>
<dbReference type="STRING" id="321327.CYA_2069"/>
<dbReference type="KEGG" id="cya:CYA_2069"/>
<dbReference type="eggNOG" id="ENOG5031AQM">
    <property type="taxonomic scope" value="Bacteria"/>
</dbReference>
<dbReference type="HOGENOM" id="CLU_137431_0_0_3"/>
<dbReference type="OrthoDB" id="461686at2"/>
<dbReference type="Proteomes" id="UP000008818">
    <property type="component" value="Chromosome"/>
</dbReference>
<dbReference type="GO" id="GO:0031676">
    <property type="term" value="C:plasma membrane-derived thylakoid membrane"/>
    <property type="evidence" value="ECO:0007669"/>
    <property type="project" value="UniProtKB-SubCell"/>
</dbReference>
<dbReference type="GO" id="GO:0016655">
    <property type="term" value="F:oxidoreductase activity, acting on NAD(P)H, quinone or similar compound as acceptor"/>
    <property type="evidence" value="ECO:0007669"/>
    <property type="project" value="UniProtKB-UniRule"/>
</dbReference>
<dbReference type="GO" id="GO:0048038">
    <property type="term" value="F:quinone binding"/>
    <property type="evidence" value="ECO:0007669"/>
    <property type="project" value="UniProtKB-KW"/>
</dbReference>
<dbReference type="HAMAP" id="MF_01352">
    <property type="entry name" value="NDH1_NDH1M"/>
    <property type="match status" value="1"/>
</dbReference>
<dbReference type="InterPro" id="IPR018922">
    <property type="entry name" value="NdhM"/>
</dbReference>
<dbReference type="PANTHER" id="PTHR36900">
    <property type="entry name" value="NAD(P)H-QUINONE OXIDOREDUCTASE SUBUNIT M, CHLOROPLASTIC"/>
    <property type="match status" value="1"/>
</dbReference>
<dbReference type="PANTHER" id="PTHR36900:SF1">
    <property type="entry name" value="NAD(P)H-QUINONE OXIDOREDUCTASE SUBUNIT M, CHLOROPLASTIC"/>
    <property type="match status" value="1"/>
</dbReference>
<dbReference type="Pfam" id="PF10664">
    <property type="entry name" value="NdhM"/>
    <property type="match status" value="1"/>
</dbReference>
<organism>
    <name type="scientific">Synechococcus sp. (strain JA-3-3Ab)</name>
    <name type="common">Cyanobacteria bacterium Yellowstone A-Prime</name>
    <dbReference type="NCBI Taxonomy" id="321327"/>
    <lineage>
        <taxon>Bacteria</taxon>
        <taxon>Bacillati</taxon>
        <taxon>Cyanobacteriota</taxon>
        <taxon>Cyanophyceae</taxon>
        <taxon>Synechococcales</taxon>
        <taxon>Synechococcaceae</taxon>
        <taxon>Synechococcus</taxon>
    </lineage>
</organism>
<reference key="1">
    <citation type="journal article" date="2007" name="ISME J.">
        <title>Population level functional diversity in a microbial community revealed by comparative genomic and metagenomic analyses.</title>
        <authorList>
            <person name="Bhaya D."/>
            <person name="Grossman A.R."/>
            <person name="Steunou A.-S."/>
            <person name="Khuri N."/>
            <person name="Cohan F.M."/>
            <person name="Hamamura N."/>
            <person name="Melendrez M.C."/>
            <person name="Bateson M.M."/>
            <person name="Ward D.M."/>
            <person name="Heidelberg J.F."/>
        </authorList>
    </citation>
    <scope>NUCLEOTIDE SEQUENCE [LARGE SCALE GENOMIC DNA]</scope>
    <source>
        <strain>JA-3-3Ab</strain>
    </source>
</reference>
<evidence type="ECO:0000255" key="1">
    <source>
        <dbReference type="HAMAP-Rule" id="MF_01352"/>
    </source>
</evidence>
<accession>Q2JT01</accession>
<proteinExistence type="inferred from homology"/>
<gene>
    <name evidence="1" type="primary">ndhM</name>
    <name type="ordered locus">CYA_2069</name>
</gene>
<keyword id="KW-0472">Membrane</keyword>
<keyword id="KW-0520">NAD</keyword>
<keyword id="KW-0521">NADP</keyword>
<keyword id="KW-0618">Plastoquinone</keyword>
<keyword id="KW-0874">Quinone</keyword>
<keyword id="KW-0793">Thylakoid</keyword>
<keyword id="KW-1278">Translocase</keyword>
<keyword id="KW-0813">Transport</keyword>
<comment type="function">
    <text evidence="1">NDH-1 shuttles electrons from an unknown electron donor, via FMN and iron-sulfur (Fe-S) centers, to quinones in the respiratory and/or the photosynthetic chain. The immediate electron acceptor for the enzyme in this species is believed to be plastoquinone. Couples the redox reaction to proton translocation, and thus conserves the redox energy in a proton gradient. Cyanobacterial NDH-1 also plays a role in inorganic carbon-concentration.</text>
</comment>
<comment type="catalytic activity">
    <reaction evidence="1">
        <text>a plastoquinone + NADH + (n+1) H(+)(in) = a plastoquinol + NAD(+) + n H(+)(out)</text>
        <dbReference type="Rhea" id="RHEA:42608"/>
        <dbReference type="Rhea" id="RHEA-COMP:9561"/>
        <dbReference type="Rhea" id="RHEA-COMP:9562"/>
        <dbReference type="ChEBI" id="CHEBI:15378"/>
        <dbReference type="ChEBI" id="CHEBI:17757"/>
        <dbReference type="ChEBI" id="CHEBI:57540"/>
        <dbReference type="ChEBI" id="CHEBI:57945"/>
        <dbReference type="ChEBI" id="CHEBI:62192"/>
    </reaction>
</comment>
<comment type="catalytic activity">
    <reaction evidence="1">
        <text>a plastoquinone + NADPH + (n+1) H(+)(in) = a plastoquinol + NADP(+) + n H(+)(out)</text>
        <dbReference type="Rhea" id="RHEA:42612"/>
        <dbReference type="Rhea" id="RHEA-COMP:9561"/>
        <dbReference type="Rhea" id="RHEA-COMP:9562"/>
        <dbReference type="ChEBI" id="CHEBI:15378"/>
        <dbReference type="ChEBI" id="CHEBI:17757"/>
        <dbReference type="ChEBI" id="CHEBI:57783"/>
        <dbReference type="ChEBI" id="CHEBI:58349"/>
        <dbReference type="ChEBI" id="CHEBI:62192"/>
    </reaction>
</comment>
<comment type="subunit">
    <text evidence="1">NDH-1 can be composed of about 15 different subunits; different subcomplexes with different compositions have been identified which probably have different functions.</text>
</comment>
<comment type="subcellular location">
    <subcellularLocation>
        <location evidence="1">Cellular thylakoid membrane</location>
        <topology evidence="1">Peripheral membrane protein</topology>
        <orientation evidence="1">Cytoplasmic side</orientation>
    </subcellularLocation>
</comment>
<comment type="similarity">
    <text evidence="1">Belongs to the complex I NdhM subunit family.</text>
</comment>
<feature type="chain" id="PRO_0000352205" description="NAD(P)H-quinone oxidoreductase subunit M">
    <location>
        <begin position="1"/>
        <end position="121"/>
    </location>
</feature>
<sequence length="121" mass="13994">MLKCTTRHVHIFAGEVTADNHFVPRDDLLTLDVDPDNELVWNDAALQKVYARFEELVEEYRGRDLTEYNLRRIGSDLEHFIRSLLKQGEIAYNLQGRTPNYSMGFPQIPAEEIVGQYIPKG</sequence>
<protein>
    <recommendedName>
        <fullName evidence="1">NAD(P)H-quinone oxidoreductase subunit M</fullName>
        <ecNumber evidence="1">7.1.1.-</ecNumber>
    </recommendedName>
    <alternativeName>
        <fullName evidence="1">NAD(P)H dehydrogenase I subunit M</fullName>
        <shortName evidence="1">NDH-1 subunit M</shortName>
        <shortName evidence="1">NDH-M</shortName>
    </alternativeName>
</protein>
<name>NDHM_SYNJA</name>